<dbReference type="EMBL" id="V01551">
    <property type="protein sequence ID" value="CAA24792.1"/>
    <property type="molecule type" value="mRNA"/>
</dbReference>
<dbReference type="EMBL" id="J04322">
    <property type="protein sequence ID" value="AAA46384.1"/>
    <property type="molecule type" value="Genomic_RNA"/>
</dbReference>
<dbReference type="PIR" id="JQ1160">
    <property type="entry name" value="VCTMSH"/>
</dbReference>
<dbReference type="PDB" id="1CGM">
    <property type="method" value="Fiber"/>
    <property type="resolution" value="3.40 A"/>
    <property type="chains" value="E=2-161"/>
</dbReference>
<dbReference type="PDBsum" id="1CGM"/>
<dbReference type="SMR" id="P69475"/>
<dbReference type="EvolutionaryTrace" id="P69475"/>
<dbReference type="GO" id="GO:0019029">
    <property type="term" value="C:helical viral capsid"/>
    <property type="evidence" value="ECO:0007669"/>
    <property type="project" value="UniProtKB-KW"/>
</dbReference>
<dbReference type="GO" id="GO:0005198">
    <property type="term" value="F:structural molecule activity"/>
    <property type="evidence" value="ECO:0007669"/>
    <property type="project" value="InterPro"/>
</dbReference>
<dbReference type="Gene3D" id="1.20.120.70">
    <property type="entry name" value="Tobacco mosaic virus-like, coat protein"/>
    <property type="match status" value="1"/>
</dbReference>
<dbReference type="InterPro" id="IPR001337">
    <property type="entry name" value="TMV-like_coat"/>
</dbReference>
<dbReference type="InterPro" id="IPR036417">
    <property type="entry name" value="TMV-like_coat_sf"/>
</dbReference>
<dbReference type="Pfam" id="PF00721">
    <property type="entry name" value="TMV_coat"/>
    <property type="match status" value="1"/>
</dbReference>
<dbReference type="SUPFAM" id="SSF47195">
    <property type="entry name" value="TMV-like viral coat proteins"/>
    <property type="match status" value="1"/>
</dbReference>
<evidence type="ECO:0000269" key="1">
    <source ref="2"/>
</evidence>
<evidence type="ECO:0000305" key="2"/>
<evidence type="ECO:0007829" key="3">
    <source>
        <dbReference type="PDB" id="1CGM"/>
    </source>
</evidence>
<reference key="1">
    <citation type="journal article" date="1983" name="Virology">
        <title>Nucleotide sequence of the coat protein cistron and the 3' noncoding region of cucumber green mottle mosaic virus (watermelon strain) RNA.</title>
        <authorList>
            <person name="Meshi T."/>
            <person name="Kiyama R."/>
            <person name="Ohno T."/>
            <person name="Okada Y."/>
        </authorList>
    </citation>
    <scope>NUCLEOTIDE SEQUENCE</scope>
</reference>
<reference key="2">
    <citation type="journal article" date="1986" name="Plant Sci.">
        <title>The amino acid sequence of cucumber green mottle mosaic virus (watermelon strain) protein.</title>
        <authorList>
            <person name="Nozu Y."/>
            <person name="Tsugita A."/>
        </authorList>
    </citation>
    <scope>PROTEIN SEQUENCE OF 2-161</scope>
    <scope>ACETYLATION AT ALA-2</scope>
</reference>
<reference key="3">
    <citation type="journal article" date="1988" name="Virology">
        <title>Interviral homologies of the 30K proteins of tobamoviruses.</title>
        <authorList>
            <person name="Saito T."/>
            <person name="Imai Y."/>
            <person name="Meshi T."/>
            <person name="Okada Y."/>
        </authorList>
    </citation>
    <scope>NUCLEOTIDE SEQUENCE OF 1-45</scope>
</reference>
<reference key="4">
    <citation type="journal article" date="1994" name="J. Mol. Biol.">
        <title>Structure determination of cucumber green mottle mosaic virus by X-ray fiber diffraction. Significance for the evolution of tobamoviruses.</title>
        <authorList>
            <person name="Wang H."/>
            <person name="Stubbs G."/>
        </authorList>
    </citation>
    <scope>X-RAY CRYSTALLOGRAPHY (3.4 ANGSTROMS) OF 1-161</scope>
</reference>
<comment type="function">
    <text>Capsid protein self-assembles to form rod-shaped virions about 18 nm in diameter with a central canal enclosing the viral genomic RNA.</text>
</comment>
<comment type="subcellular location">
    <subcellularLocation>
        <location evidence="2">Virion</location>
    </subcellularLocation>
</comment>
<comment type="similarity">
    <text evidence="2">Belongs to the virgaviridae capsid protein family.</text>
</comment>
<gene>
    <name type="primary">CP</name>
</gene>
<organism>
    <name type="scientific">Cucumber green mottle mosaic virus (strain watermelon W)</name>
    <name type="common">CGMMV</name>
    <dbReference type="NCBI Taxonomy" id="12237"/>
    <lineage>
        <taxon>Viruses</taxon>
        <taxon>Riboviria</taxon>
        <taxon>Orthornavirae</taxon>
        <taxon>Kitrinoviricota</taxon>
        <taxon>Alsuviricetes</taxon>
        <taxon>Martellivirales</taxon>
        <taxon>Virgaviridae</taxon>
        <taxon>Tobamovirus</taxon>
        <taxon>Cucumber green mottle mosaic virus</taxon>
    </lineage>
</organism>
<protein>
    <recommendedName>
        <fullName>Capsid protein</fullName>
    </recommendedName>
    <alternativeName>
        <fullName>Coat protein</fullName>
    </alternativeName>
</protein>
<sequence>MAYNPITPSKLIAFSASYVPVRTLLNFLVASQGTAFQTQAGRDSFRESLSALPSSVVDINSRFPDAGFYAFLNGPVLRPIFVSLLSSTDTRNRVIEVVDPSNPTTAESLNAVKRTDDASTAARAEIDNLIESISKGFDVYDRASFEAAFSVVWSEATTSKA</sequence>
<proteinExistence type="evidence at protein level"/>
<feature type="initiator methionine" description="Removed; by host" evidence="1">
    <location>
        <position position="1"/>
    </location>
</feature>
<feature type="chain" id="PRO_0000144929" description="Capsid protein">
    <location>
        <begin position="2"/>
        <end position="161"/>
    </location>
</feature>
<feature type="modified residue" description="N-acetylalanine; by host" evidence="1">
    <location>
        <position position="2"/>
    </location>
</feature>
<feature type="turn" evidence="3">
    <location>
        <begin position="13"/>
        <end position="15"/>
    </location>
</feature>
<feature type="strand" evidence="3">
    <location>
        <begin position="16"/>
        <end position="19"/>
    </location>
</feature>
<feature type="helix" evidence="3">
    <location>
        <begin position="22"/>
        <end position="30"/>
    </location>
</feature>
<feature type="strand" evidence="3">
    <location>
        <begin position="37"/>
        <end position="39"/>
    </location>
</feature>
<feature type="helix" evidence="3">
    <location>
        <begin position="40"/>
        <end position="51"/>
    </location>
</feature>
<feature type="strand" evidence="3">
    <location>
        <begin position="58"/>
        <end position="60"/>
    </location>
</feature>
<feature type="turn" evidence="3">
    <location>
        <begin position="74"/>
        <end position="79"/>
    </location>
</feature>
<feature type="helix" evidence="3">
    <location>
        <begin position="80"/>
        <end position="87"/>
    </location>
</feature>
<feature type="strand" evidence="3">
    <location>
        <begin position="102"/>
        <end position="104"/>
    </location>
</feature>
<feature type="turn" evidence="3">
    <location>
        <begin position="105"/>
        <end position="108"/>
    </location>
</feature>
<feature type="helix" evidence="3">
    <location>
        <begin position="112"/>
        <end position="134"/>
    </location>
</feature>
<feature type="strand" evidence="3">
    <location>
        <begin position="135"/>
        <end position="137"/>
    </location>
</feature>
<feature type="helix" evidence="3">
    <location>
        <begin position="142"/>
        <end position="148"/>
    </location>
</feature>
<feature type="strand" evidence="3">
    <location>
        <begin position="157"/>
        <end position="159"/>
    </location>
</feature>
<name>CAPSD_CGMVW</name>
<keyword id="KW-0002">3D-structure</keyword>
<keyword id="KW-0007">Acetylation</keyword>
<keyword id="KW-0167">Capsid protein</keyword>
<keyword id="KW-0903">Direct protein sequencing</keyword>
<keyword id="KW-1139">Helical capsid protein</keyword>
<keyword id="KW-0946">Virion</keyword>
<accession>P69475</accession>
<accession>P19521</accession>
<organismHost>
    <name type="scientific">Citrullus</name>
    <dbReference type="NCBI Taxonomy" id="3653"/>
</organismHost>
<organismHost>
    <name type="scientific">Cucumis sativus</name>
    <name type="common">Cucumber</name>
    <dbReference type="NCBI Taxonomy" id="3659"/>
</organismHost>
<organismHost>
    <name type="scientific">Lagenaria siceraria</name>
    <name type="common">Bottle gourd</name>
    <name type="synonym">Lagenaria leucantha</name>
    <dbReference type="NCBI Taxonomy" id="3668"/>
</organismHost>